<comment type="function">
    <text evidence="1">Synthesizes alpha-1,4-glucan chains using ADP-glucose.</text>
</comment>
<comment type="catalytic activity">
    <reaction evidence="1">
        <text>[(1-&gt;4)-alpha-D-glucosyl](n) + ADP-alpha-D-glucose = [(1-&gt;4)-alpha-D-glucosyl](n+1) + ADP + H(+)</text>
        <dbReference type="Rhea" id="RHEA:18189"/>
        <dbReference type="Rhea" id="RHEA-COMP:9584"/>
        <dbReference type="Rhea" id="RHEA-COMP:9587"/>
        <dbReference type="ChEBI" id="CHEBI:15378"/>
        <dbReference type="ChEBI" id="CHEBI:15444"/>
        <dbReference type="ChEBI" id="CHEBI:57498"/>
        <dbReference type="ChEBI" id="CHEBI:456216"/>
        <dbReference type="EC" id="2.4.1.21"/>
    </reaction>
</comment>
<comment type="pathway">
    <text evidence="1">Glycan biosynthesis; glycogen biosynthesis.</text>
</comment>
<comment type="similarity">
    <text evidence="1">Belongs to the glycosyltransferase 1 family. Bacterial/plant glycogen synthase subfamily.</text>
</comment>
<proteinExistence type="inferred from homology"/>
<accession>A4WRM2</accession>
<gene>
    <name evidence="1" type="primary">glgA</name>
    <name type="ordered locus">Rsph17025_1135</name>
</gene>
<name>GLGA_CERS5</name>
<reference key="1">
    <citation type="submission" date="2007-04" db="EMBL/GenBank/DDBJ databases">
        <title>Complete sequence of chromosome of Rhodobacter sphaeroides ATCC 17025.</title>
        <authorList>
            <consortium name="US DOE Joint Genome Institute"/>
            <person name="Copeland A."/>
            <person name="Lucas S."/>
            <person name="Lapidus A."/>
            <person name="Barry K."/>
            <person name="Detter J.C."/>
            <person name="Glavina del Rio T."/>
            <person name="Hammon N."/>
            <person name="Israni S."/>
            <person name="Dalin E."/>
            <person name="Tice H."/>
            <person name="Pitluck S."/>
            <person name="Chertkov O."/>
            <person name="Brettin T."/>
            <person name="Bruce D."/>
            <person name="Han C."/>
            <person name="Schmutz J."/>
            <person name="Larimer F."/>
            <person name="Land M."/>
            <person name="Hauser L."/>
            <person name="Kyrpides N."/>
            <person name="Kim E."/>
            <person name="Richardson P."/>
            <person name="Mackenzie C."/>
            <person name="Choudhary M."/>
            <person name="Donohue T.J."/>
            <person name="Kaplan S."/>
        </authorList>
    </citation>
    <scope>NUCLEOTIDE SEQUENCE [LARGE SCALE GENOMIC DNA]</scope>
    <source>
        <strain>ATCC 17025 / ATH 2.4.3</strain>
    </source>
</reference>
<keyword id="KW-0320">Glycogen biosynthesis</keyword>
<keyword id="KW-0328">Glycosyltransferase</keyword>
<keyword id="KW-0808">Transferase</keyword>
<evidence type="ECO:0000255" key="1">
    <source>
        <dbReference type="HAMAP-Rule" id="MF_00484"/>
    </source>
</evidence>
<organism>
    <name type="scientific">Cereibacter sphaeroides (strain ATCC 17025 / ATH 2.4.3)</name>
    <name type="common">Rhodobacter sphaeroides</name>
    <dbReference type="NCBI Taxonomy" id="349102"/>
    <lineage>
        <taxon>Bacteria</taxon>
        <taxon>Pseudomonadati</taxon>
        <taxon>Pseudomonadota</taxon>
        <taxon>Alphaproteobacteria</taxon>
        <taxon>Rhodobacterales</taxon>
        <taxon>Paracoccaceae</taxon>
        <taxon>Cereibacter</taxon>
    </lineage>
</organism>
<protein>
    <recommendedName>
        <fullName evidence="1">Glycogen synthase</fullName>
        <ecNumber evidence="1">2.4.1.21</ecNumber>
    </recommendedName>
    <alternativeName>
        <fullName evidence="1">Starch [bacterial glycogen] synthase</fullName>
    </alternativeName>
</protein>
<sequence length="478" mass="51183">METARGRVLSVASECVPLLKTGGLADVVGALPGALAAEGWEMRVLMPCYRPLRWRLEQMEEVFSEEDLFGGRGRVMAGEVAGRRMLLLDAPHLYDREGGPYAGPWGDWGDNAQRFAALSWIAARIAREGLSDGWRPEVLHAHDWQAGFAPAYLAYWGSGGVRSVLTVHNIAFQGWAPAALLPSLRLPASEFHPAALEYYGGLSSLKAGLVTADHITTVSPTYACELMRPEFGMGLQGVIAARAGQVSGILNGVDTDIWSPEAEERPYTARSLKAKAENRAVLSGAFKLDVPGPLAILVSRLTYQKGIDLIPEVLPDFIAAGGGLAVLGTGDAALEGAMRELEVRFSGRVGVRIGYDEGLSHLMFAGGDAVLVPSRFEPCGLTQMYGLRYGAIPVVALTGGLADTIINANPAALTAGCATGLTFHPTEPPAFAEALRRLIHLYADHALWEKVQKNAMRHPVGWQTSAAAYAALYRELVA</sequence>
<feature type="chain" id="PRO_1000014382" description="Glycogen synthase">
    <location>
        <begin position="1"/>
        <end position="478"/>
    </location>
</feature>
<feature type="binding site" evidence="1">
    <location>
        <position position="20"/>
    </location>
    <ligand>
        <name>ADP-alpha-D-glucose</name>
        <dbReference type="ChEBI" id="CHEBI:57498"/>
    </ligand>
</feature>
<dbReference type="EC" id="2.4.1.21" evidence="1"/>
<dbReference type="EMBL" id="CP000661">
    <property type="protein sequence ID" value="ABP70036.1"/>
    <property type="molecule type" value="Genomic_DNA"/>
</dbReference>
<dbReference type="SMR" id="A4WRM2"/>
<dbReference type="STRING" id="349102.Rsph17025_1135"/>
<dbReference type="CAZy" id="GT5">
    <property type="family name" value="Glycosyltransferase Family 5"/>
</dbReference>
<dbReference type="KEGG" id="rsq:Rsph17025_1135"/>
<dbReference type="eggNOG" id="COG0297">
    <property type="taxonomic scope" value="Bacteria"/>
</dbReference>
<dbReference type="HOGENOM" id="CLU_009583_18_4_5"/>
<dbReference type="BioCyc" id="RSPH349102:G1G8M-1163-MONOMER"/>
<dbReference type="UniPathway" id="UPA00164"/>
<dbReference type="GO" id="GO:0005829">
    <property type="term" value="C:cytosol"/>
    <property type="evidence" value="ECO:0007669"/>
    <property type="project" value="TreeGrafter"/>
</dbReference>
<dbReference type="GO" id="GO:0009011">
    <property type="term" value="F:alpha-1,4-glucan glucosyltransferase (ADP-glucose donor) activity"/>
    <property type="evidence" value="ECO:0007669"/>
    <property type="project" value="UniProtKB-UniRule"/>
</dbReference>
<dbReference type="GO" id="GO:0004373">
    <property type="term" value="F:alpha-1,4-glucan glucosyltransferase (UDP-glucose donor) activity"/>
    <property type="evidence" value="ECO:0007669"/>
    <property type="project" value="InterPro"/>
</dbReference>
<dbReference type="GO" id="GO:0005978">
    <property type="term" value="P:glycogen biosynthetic process"/>
    <property type="evidence" value="ECO:0007669"/>
    <property type="project" value="UniProtKB-UniRule"/>
</dbReference>
<dbReference type="CDD" id="cd03791">
    <property type="entry name" value="GT5_Glycogen_synthase_DULL1-like"/>
    <property type="match status" value="1"/>
</dbReference>
<dbReference type="Gene3D" id="3.40.50.2000">
    <property type="entry name" value="Glycogen Phosphorylase B"/>
    <property type="match status" value="2"/>
</dbReference>
<dbReference type="HAMAP" id="MF_00484">
    <property type="entry name" value="Glycogen_synth"/>
    <property type="match status" value="1"/>
</dbReference>
<dbReference type="InterPro" id="IPR011835">
    <property type="entry name" value="GS/SS"/>
</dbReference>
<dbReference type="InterPro" id="IPR013534">
    <property type="entry name" value="Starch_synth_cat_dom"/>
</dbReference>
<dbReference type="NCBIfam" id="TIGR02095">
    <property type="entry name" value="glgA"/>
    <property type="match status" value="1"/>
</dbReference>
<dbReference type="NCBIfam" id="NF001899">
    <property type="entry name" value="PRK00654.1-2"/>
    <property type="match status" value="1"/>
</dbReference>
<dbReference type="PANTHER" id="PTHR45825:SF11">
    <property type="entry name" value="ALPHA AMYLASE DOMAIN-CONTAINING PROTEIN"/>
    <property type="match status" value="1"/>
</dbReference>
<dbReference type="PANTHER" id="PTHR45825">
    <property type="entry name" value="GRANULE-BOUND STARCH SYNTHASE 1, CHLOROPLASTIC/AMYLOPLASTIC"/>
    <property type="match status" value="1"/>
</dbReference>
<dbReference type="Pfam" id="PF13692">
    <property type="entry name" value="Glyco_trans_1_4"/>
    <property type="match status" value="1"/>
</dbReference>
<dbReference type="Pfam" id="PF08323">
    <property type="entry name" value="Glyco_transf_5"/>
    <property type="match status" value="1"/>
</dbReference>
<dbReference type="SUPFAM" id="SSF53756">
    <property type="entry name" value="UDP-Glycosyltransferase/glycogen phosphorylase"/>
    <property type="match status" value="1"/>
</dbReference>